<evidence type="ECO:0000255" key="1">
    <source>
        <dbReference type="HAMAP-Rule" id="MF_00361"/>
    </source>
</evidence>
<keyword id="KW-0067">ATP-binding</keyword>
<keyword id="KW-0963">Cytoplasm</keyword>
<keyword id="KW-0418">Kinase</keyword>
<keyword id="KW-0520">NAD</keyword>
<keyword id="KW-0521">NADP</keyword>
<keyword id="KW-0547">Nucleotide-binding</keyword>
<keyword id="KW-1185">Reference proteome</keyword>
<keyword id="KW-0808">Transferase</keyword>
<organism>
    <name type="scientific">Halobacterium salinarum (strain ATCC 700922 / JCM 11081 / NRC-1)</name>
    <name type="common">Halobacterium halobium</name>
    <dbReference type="NCBI Taxonomy" id="64091"/>
    <lineage>
        <taxon>Archaea</taxon>
        <taxon>Methanobacteriati</taxon>
        <taxon>Methanobacteriota</taxon>
        <taxon>Stenosarchaea group</taxon>
        <taxon>Halobacteria</taxon>
        <taxon>Halobacteriales</taxon>
        <taxon>Halobacteriaceae</taxon>
        <taxon>Halobacterium</taxon>
        <taxon>Halobacterium salinarum NRC-34001</taxon>
    </lineage>
</organism>
<protein>
    <recommendedName>
        <fullName evidence="1">NAD kinase</fullName>
        <ecNumber evidence="1">2.7.1.23</ecNumber>
    </recommendedName>
    <alternativeName>
        <fullName evidence="1">ATP-dependent NAD kinase</fullName>
    </alternativeName>
</protein>
<name>NADK_HALSA</name>
<feature type="chain" id="PRO_0000120698" description="NAD kinase">
    <location>
        <begin position="1"/>
        <end position="282"/>
    </location>
</feature>
<feature type="active site" description="Proton acceptor" evidence="1">
    <location>
        <position position="67"/>
    </location>
</feature>
<feature type="binding site" evidence="1">
    <location>
        <begin position="67"/>
        <end position="68"/>
    </location>
    <ligand>
        <name>NAD(+)</name>
        <dbReference type="ChEBI" id="CHEBI:57540"/>
    </ligand>
</feature>
<feature type="binding site" evidence="1">
    <location>
        <begin position="140"/>
        <end position="141"/>
    </location>
    <ligand>
        <name>NAD(+)</name>
        <dbReference type="ChEBI" id="CHEBI:57540"/>
    </ligand>
</feature>
<feature type="binding site" evidence="1">
    <location>
        <position position="151"/>
    </location>
    <ligand>
        <name>NAD(+)</name>
        <dbReference type="ChEBI" id="CHEBI:57540"/>
    </ligand>
</feature>
<feature type="binding site" evidence="1">
    <location>
        <position position="170"/>
    </location>
    <ligand>
        <name>NAD(+)</name>
        <dbReference type="ChEBI" id="CHEBI:57540"/>
    </ligand>
</feature>
<feature type="binding site" evidence="1">
    <location>
        <position position="172"/>
    </location>
    <ligand>
        <name>NAD(+)</name>
        <dbReference type="ChEBI" id="CHEBI:57540"/>
    </ligand>
</feature>
<feature type="binding site" evidence="1">
    <location>
        <begin position="183"/>
        <end position="188"/>
    </location>
    <ligand>
        <name>NAD(+)</name>
        <dbReference type="ChEBI" id="CHEBI:57540"/>
    </ligand>
</feature>
<sequence>MHVGIVAQRGNERATSLAGEIREQLRALEVTVWVDTATAEALACAGECGRDTTAFTDCDLVVSIGGDGTFLFAARGAGATPILGVNLGEVGFLNAVAPADAVEAVREEVNRYRETGAVRCREVPRVVAAGDGWASTPALNEVAIQGEQRGHGHGVAVDVRVDGSQYEATRADGVLVATPTGSTAYNLSEGGPLVQPSVDALVVTEMCGADALPPLVTGLDSEIRIRVETLDDGGEGRVVVASDGGRLTRVDPPVEMTVTAADEPARVAGPAADFFEALSKLE</sequence>
<accession>Q9HNX7</accession>
<reference key="1">
    <citation type="journal article" date="2000" name="Proc. Natl. Acad. Sci. U.S.A.">
        <title>Genome sequence of Halobacterium species NRC-1.</title>
        <authorList>
            <person name="Ng W.V."/>
            <person name="Kennedy S.P."/>
            <person name="Mahairas G.G."/>
            <person name="Berquist B."/>
            <person name="Pan M."/>
            <person name="Shukla H.D."/>
            <person name="Lasky S.R."/>
            <person name="Baliga N.S."/>
            <person name="Thorsson V."/>
            <person name="Sbrogna J."/>
            <person name="Swartzell S."/>
            <person name="Weir D."/>
            <person name="Hall J."/>
            <person name="Dahl T.A."/>
            <person name="Welti R."/>
            <person name="Goo Y.A."/>
            <person name="Leithauser B."/>
            <person name="Keller K."/>
            <person name="Cruz R."/>
            <person name="Danson M.J."/>
            <person name="Hough D.W."/>
            <person name="Maddocks D.G."/>
            <person name="Jablonski P.E."/>
            <person name="Krebs M.P."/>
            <person name="Angevine C.M."/>
            <person name="Dale H."/>
            <person name="Isenbarger T.A."/>
            <person name="Peck R.F."/>
            <person name="Pohlschroder M."/>
            <person name="Spudich J.L."/>
            <person name="Jung K.-H."/>
            <person name="Alam M."/>
            <person name="Freitas T."/>
            <person name="Hou S."/>
            <person name="Daniels C.J."/>
            <person name="Dennis P.P."/>
            <person name="Omer A.D."/>
            <person name="Ebhardt H."/>
            <person name="Lowe T.M."/>
            <person name="Liang P."/>
            <person name="Riley M."/>
            <person name="Hood L."/>
            <person name="DasSarma S."/>
        </authorList>
    </citation>
    <scope>NUCLEOTIDE SEQUENCE [LARGE SCALE GENOMIC DNA]</scope>
    <source>
        <strain>ATCC 700922 / JCM 11081 / NRC-1</strain>
    </source>
</reference>
<comment type="function">
    <text evidence="1">Involved in the regulation of the intracellular balance of NAD and NADP, and is a key enzyme in the biosynthesis of NADP. Catalyzes specifically the phosphorylation on 2'-hydroxyl of the adenosine moiety of NAD to yield NADP.</text>
</comment>
<comment type="catalytic activity">
    <reaction evidence="1">
        <text>NAD(+) + ATP = ADP + NADP(+) + H(+)</text>
        <dbReference type="Rhea" id="RHEA:18629"/>
        <dbReference type="ChEBI" id="CHEBI:15378"/>
        <dbReference type="ChEBI" id="CHEBI:30616"/>
        <dbReference type="ChEBI" id="CHEBI:57540"/>
        <dbReference type="ChEBI" id="CHEBI:58349"/>
        <dbReference type="ChEBI" id="CHEBI:456216"/>
        <dbReference type="EC" id="2.7.1.23"/>
    </reaction>
</comment>
<comment type="cofactor">
    <cofactor evidence="1">
        <name>a divalent metal cation</name>
        <dbReference type="ChEBI" id="CHEBI:60240"/>
    </cofactor>
</comment>
<comment type="subcellular location">
    <subcellularLocation>
        <location evidence="1">Cytoplasm</location>
    </subcellularLocation>
</comment>
<comment type="similarity">
    <text evidence="1">Belongs to the NAD kinase family.</text>
</comment>
<gene>
    <name evidence="1" type="primary">nadK</name>
    <name type="ordered locus">VNG_1900C</name>
</gene>
<dbReference type="EC" id="2.7.1.23" evidence="1"/>
<dbReference type="EMBL" id="AE004437">
    <property type="protein sequence ID" value="AAG20093.1"/>
    <property type="molecule type" value="Genomic_DNA"/>
</dbReference>
<dbReference type="PIR" id="A84341">
    <property type="entry name" value="A84341"/>
</dbReference>
<dbReference type="RefSeq" id="WP_010903393.1">
    <property type="nucleotide sequence ID" value="NC_002607.1"/>
</dbReference>
<dbReference type="SMR" id="Q9HNX7"/>
<dbReference type="STRING" id="64091.VNG_1900C"/>
<dbReference type="PaxDb" id="64091-VNG_1900C"/>
<dbReference type="KEGG" id="hal:VNG_1900C"/>
<dbReference type="PATRIC" id="fig|64091.14.peg.1452"/>
<dbReference type="HOGENOM" id="CLU_008831_0_2_2"/>
<dbReference type="InParanoid" id="Q9HNX7"/>
<dbReference type="OrthoDB" id="77798at2157"/>
<dbReference type="PhylomeDB" id="Q9HNX7"/>
<dbReference type="Proteomes" id="UP000000554">
    <property type="component" value="Chromosome"/>
</dbReference>
<dbReference type="GO" id="GO:0005737">
    <property type="term" value="C:cytoplasm"/>
    <property type="evidence" value="ECO:0007669"/>
    <property type="project" value="UniProtKB-SubCell"/>
</dbReference>
<dbReference type="GO" id="GO:0005524">
    <property type="term" value="F:ATP binding"/>
    <property type="evidence" value="ECO:0007669"/>
    <property type="project" value="UniProtKB-KW"/>
</dbReference>
<dbReference type="GO" id="GO:0046872">
    <property type="term" value="F:metal ion binding"/>
    <property type="evidence" value="ECO:0007669"/>
    <property type="project" value="UniProtKB-UniRule"/>
</dbReference>
<dbReference type="GO" id="GO:0003951">
    <property type="term" value="F:NAD+ kinase activity"/>
    <property type="evidence" value="ECO:0000318"/>
    <property type="project" value="GO_Central"/>
</dbReference>
<dbReference type="GO" id="GO:0019674">
    <property type="term" value="P:NAD metabolic process"/>
    <property type="evidence" value="ECO:0007669"/>
    <property type="project" value="InterPro"/>
</dbReference>
<dbReference type="GO" id="GO:0006741">
    <property type="term" value="P:NADP biosynthetic process"/>
    <property type="evidence" value="ECO:0000318"/>
    <property type="project" value="GO_Central"/>
</dbReference>
<dbReference type="Gene3D" id="3.40.50.10330">
    <property type="entry name" value="Probable inorganic polyphosphate/atp-NAD kinase, domain 1"/>
    <property type="match status" value="1"/>
</dbReference>
<dbReference type="Gene3D" id="2.60.200.30">
    <property type="entry name" value="Probable inorganic polyphosphate/atp-NAD kinase, domain 2"/>
    <property type="match status" value="1"/>
</dbReference>
<dbReference type="HAMAP" id="MF_00361">
    <property type="entry name" value="NAD_kinase"/>
    <property type="match status" value="1"/>
</dbReference>
<dbReference type="InterPro" id="IPR017438">
    <property type="entry name" value="ATP-NAD_kinase_N"/>
</dbReference>
<dbReference type="InterPro" id="IPR017437">
    <property type="entry name" value="ATP-NAD_kinase_PpnK-typ_C"/>
</dbReference>
<dbReference type="InterPro" id="IPR016064">
    <property type="entry name" value="NAD/diacylglycerol_kinase_sf"/>
</dbReference>
<dbReference type="InterPro" id="IPR002504">
    <property type="entry name" value="NADK"/>
</dbReference>
<dbReference type="PANTHER" id="PTHR20275:SF43">
    <property type="entry name" value="BIFUNCTIONAL NADP PHOSPHATASE_NAD KINASE"/>
    <property type="match status" value="1"/>
</dbReference>
<dbReference type="PANTHER" id="PTHR20275">
    <property type="entry name" value="NAD KINASE"/>
    <property type="match status" value="1"/>
</dbReference>
<dbReference type="Pfam" id="PF01513">
    <property type="entry name" value="NAD_kinase"/>
    <property type="match status" value="1"/>
</dbReference>
<dbReference type="Pfam" id="PF20143">
    <property type="entry name" value="NAD_kinase_C"/>
    <property type="match status" value="1"/>
</dbReference>
<dbReference type="SUPFAM" id="SSF111331">
    <property type="entry name" value="NAD kinase/diacylglycerol kinase-like"/>
    <property type="match status" value="1"/>
</dbReference>
<proteinExistence type="inferred from homology"/>